<name>RL15_TOLAT</name>
<sequence length="144" mass="14655">MRLNTLSPAAGAKSAKKRVGRGIGSGLGKTGGRGVKGAGSRSGGGVRAGFEGGQMPLKIRMPKFGFYSRKGAVTAEVRLSEVAKVEGDVVDLNTLKQAGVITKGMQFAKIVLSGNIDRAVTVRGVSVTKGARAAIEAAGGKIEE</sequence>
<protein>
    <recommendedName>
        <fullName evidence="1">Large ribosomal subunit protein uL15</fullName>
    </recommendedName>
    <alternativeName>
        <fullName evidence="3">50S ribosomal protein L15</fullName>
    </alternativeName>
</protein>
<evidence type="ECO:0000255" key="1">
    <source>
        <dbReference type="HAMAP-Rule" id="MF_01341"/>
    </source>
</evidence>
<evidence type="ECO:0000256" key="2">
    <source>
        <dbReference type="SAM" id="MobiDB-lite"/>
    </source>
</evidence>
<evidence type="ECO:0000305" key="3"/>
<feature type="chain" id="PRO_1000214719" description="Large ribosomal subunit protein uL15">
    <location>
        <begin position="1"/>
        <end position="144"/>
    </location>
</feature>
<feature type="region of interest" description="Disordered" evidence="2">
    <location>
        <begin position="1"/>
        <end position="50"/>
    </location>
</feature>
<feature type="compositionally biased region" description="Gly residues" evidence="2">
    <location>
        <begin position="21"/>
        <end position="50"/>
    </location>
</feature>
<keyword id="KW-1185">Reference proteome</keyword>
<keyword id="KW-0687">Ribonucleoprotein</keyword>
<keyword id="KW-0689">Ribosomal protein</keyword>
<keyword id="KW-0694">RNA-binding</keyword>
<keyword id="KW-0699">rRNA-binding</keyword>
<gene>
    <name evidence="1" type="primary">rplO</name>
    <name type="ordered locus">Tola_0118</name>
</gene>
<accession>C4L7U9</accession>
<proteinExistence type="inferred from homology"/>
<organism>
    <name type="scientific">Tolumonas auensis (strain DSM 9187 / NBRC 110442 / TA 4)</name>
    <dbReference type="NCBI Taxonomy" id="595494"/>
    <lineage>
        <taxon>Bacteria</taxon>
        <taxon>Pseudomonadati</taxon>
        <taxon>Pseudomonadota</taxon>
        <taxon>Gammaproteobacteria</taxon>
        <taxon>Aeromonadales</taxon>
        <taxon>Aeromonadaceae</taxon>
        <taxon>Tolumonas</taxon>
    </lineage>
</organism>
<dbReference type="EMBL" id="CP001616">
    <property type="protein sequence ID" value="ACQ91748.1"/>
    <property type="molecule type" value="Genomic_DNA"/>
</dbReference>
<dbReference type="RefSeq" id="WP_012728347.1">
    <property type="nucleotide sequence ID" value="NC_012691.1"/>
</dbReference>
<dbReference type="SMR" id="C4L7U9"/>
<dbReference type="STRING" id="595494.Tola_0118"/>
<dbReference type="KEGG" id="tau:Tola_0118"/>
<dbReference type="eggNOG" id="COG0200">
    <property type="taxonomic scope" value="Bacteria"/>
</dbReference>
<dbReference type="HOGENOM" id="CLU_055188_4_2_6"/>
<dbReference type="OrthoDB" id="9810293at2"/>
<dbReference type="Proteomes" id="UP000009073">
    <property type="component" value="Chromosome"/>
</dbReference>
<dbReference type="GO" id="GO:0022625">
    <property type="term" value="C:cytosolic large ribosomal subunit"/>
    <property type="evidence" value="ECO:0007669"/>
    <property type="project" value="TreeGrafter"/>
</dbReference>
<dbReference type="GO" id="GO:0019843">
    <property type="term" value="F:rRNA binding"/>
    <property type="evidence" value="ECO:0007669"/>
    <property type="project" value="UniProtKB-UniRule"/>
</dbReference>
<dbReference type="GO" id="GO:0003735">
    <property type="term" value="F:structural constituent of ribosome"/>
    <property type="evidence" value="ECO:0007669"/>
    <property type="project" value="InterPro"/>
</dbReference>
<dbReference type="GO" id="GO:0006412">
    <property type="term" value="P:translation"/>
    <property type="evidence" value="ECO:0007669"/>
    <property type="project" value="UniProtKB-UniRule"/>
</dbReference>
<dbReference type="Gene3D" id="3.100.10.10">
    <property type="match status" value="1"/>
</dbReference>
<dbReference type="HAMAP" id="MF_01341">
    <property type="entry name" value="Ribosomal_uL15"/>
    <property type="match status" value="1"/>
</dbReference>
<dbReference type="InterPro" id="IPR030878">
    <property type="entry name" value="Ribosomal_uL15"/>
</dbReference>
<dbReference type="InterPro" id="IPR021131">
    <property type="entry name" value="Ribosomal_uL15/eL18"/>
</dbReference>
<dbReference type="InterPro" id="IPR036227">
    <property type="entry name" value="Ribosomal_uL15/eL18_sf"/>
</dbReference>
<dbReference type="InterPro" id="IPR005749">
    <property type="entry name" value="Ribosomal_uL15_bac-type"/>
</dbReference>
<dbReference type="InterPro" id="IPR001196">
    <property type="entry name" value="Ribosomal_uL15_CS"/>
</dbReference>
<dbReference type="NCBIfam" id="TIGR01071">
    <property type="entry name" value="rplO_bact"/>
    <property type="match status" value="1"/>
</dbReference>
<dbReference type="PANTHER" id="PTHR12934">
    <property type="entry name" value="50S RIBOSOMAL PROTEIN L15"/>
    <property type="match status" value="1"/>
</dbReference>
<dbReference type="PANTHER" id="PTHR12934:SF11">
    <property type="entry name" value="LARGE RIBOSOMAL SUBUNIT PROTEIN UL15M"/>
    <property type="match status" value="1"/>
</dbReference>
<dbReference type="Pfam" id="PF00828">
    <property type="entry name" value="Ribosomal_L27A"/>
    <property type="match status" value="1"/>
</dbReference>
<dbReference type="SUPFAM" id="SSF52080">
    <property type="entry name" value="Ribosomal proteins L15p and L18e"/>
    <property type="match status" value="1"/>
</dbReference>
<dbReference type="PROSITE" id="PS00475">
    <property type="entry name" value="RIBOSOMAL_L15"/>
    <property type="match status" value="1"/>
</dbReference>
<comment type="function">
    <text evidence="1">Binds to the 23S rRNA.</text>
</comment>
<comment type="subunit">
    <text evidence="1">Part of the 50S ribosomal subunit.</text>
</comment>
<comment type="similarity">
    <text evidence="1">Belongs to the universal ribosomal protein uL15 family.</text>
</comment>
<reference key="1">
    <citation type="submission" date="2009-05" db="EMBL/GenBank/DDBJ databases">
        <title>Complete sequence of Tolumonas auensis DSM 9187.</title>
        <authorList>
            <consortium name="US DOE Joint Genome Institute"/>
            <person name="Lucas S."/>
            <person name="Copeland A."/>
            <person name="Lapidus A."/>
            <person name="Glavina del Rio T."/>
            <person name="Tice H."/>
            <person name="Bruce D."/>
            <person name="Goodwin L."/>
            <person name="Pitluck S."/>
            <person name="Chertkov O."/>
            <person name="Brettin T."/>
            <person name="Detter J.C."/>
            <person name="Han C."/>
            <person name="Larimer F."/>
            <person name="Land M."/>
            <person name="Hauser L."/>
            <person name="Kyrpides N."/>
            <person name="Mikhailova N."/>
            <person name="Spring S."/>
            <person name="Beller H."/>
        </authorList>
    </citation>
    <scope>NUCLEOTIDE SEQUENCE [LARGE SCALE GENOMIC DNA]</scope>
    <source>
        <strain>DSM 9187 / NBRC 110442 / TA 4</strain>
    </source>
</reference>